<organism>
    <name type="scientific">Bordetella petrii (strain ATCC BAA-461 / DSM 12804 / CCUG 43448)</name>
    <dbReference type="NCBI Taxonomy" id="340100"/>
    <lineage>
        <taxon>Bacteria</taxon>
        <taxon>Pseudomonadati</taxon>
        <taxon>Pseudomonadota</taxon>
        <taxon>Betaproteobacteria</taxon>
        <taxon>Burkholderiales</taxon>
        <taxon>Alcaligenaceae</taxon>
        <taxon>Bordetella</taxon>
    </lineage>
</organism>
<gene>
    <name evidence="1" type="primary">smc</name>
    <name type="ordered locus">Bpet1704</name>
</gene>
<name>SMC_BORPD</name>
<comment type="function">
    <text evidence="1">Required for chromosome condensation and partitioning.</text>
</comment>
<comment type="subunit">
    <text evidence="1">Homodimer.</text>
</comment>
<comment type="subcellular location">
    <subcellularLocation>
        <location evidence="1">Cytoplasm</location>
    </subcellularLocation>
</comment>
<comment type="domain">
    <text evidence="1">Contains large globular domains required for ATP hydrolysis at each terminus and a third globular domain forming a flexible SMC hinge near the middle of the molecule. These domains are separated by coiled-coil structures.</text>
</comment>
<comment type="similarity">
    <text evidence="1">Belongs to the SMC family.</text>
</comment>
<comment type="sequence caution" evidence="2">
    <conflict type="erroneous initiation">
        <sequence resource="EMBL-CDS" id="CAP42043"/>
    </conflict>
    <text>Extended N-terminus.</text>
</comment>
<proteinExistence type="inferred from homology"/>
<sequence length="1176" mass="130561">MRLTQLKLAGFKSFVDPTVIPVPSQLVGVVGPNGCGKSNIIDAVRWVLGEAKASELRGESMQDVIFNGSGNRKPAARASVEMVFDNSEGRAAGQWSTYSEIAVRRVLTRDGTSSYYVNNQQVRRRDIHDIFLGTGLGARGYAIIGQGMINRLIEARPEELRVFLEEAAGVSRYKERRRETENRLSDTRENLTRVEDILRELGSQLEKLEAQAEVARQYRELQADGEKKQFALWLLKETGARDERQRKSQEMAQAQTNLEAAIANLRSGEAELESRRQAHYAAGDAVHAAQGQLYEANAQVSRLEAEIRHVVDSRNRLQARREQLQQQIAEWDAQQTHCVEQIAQAEDDLATGAARTEEARALAEEAHASLPAVEARVRDAAASRDEMRSSLARVEQNLALAAQTQRDADRQLQNLEQRRERLQQELRELHAPDPVRLEQLAGDRAAGEDQLEEAQQELAALEARVPEADAERSRAQAAAQQDAQNLARLEARLAALVKLQEDVQKQGALEPWLAKHELAGLGRLWQKLHIEPGWENALEAVLRERMAALEVRNLDWSRAFAEDAPPARLAFYQMPAAAPTPAAPQGLTPLASLLRITDPDLRTLLNDWLGNIYTAPDLGQALAARATLPAGAACVVPAGHLVDAHSVRFYAPDSEQAGLLARQQEIENLQREIKAQQLIADQARAAVARAESAWQQVSQAVAPARQRVAEITRRVHDIQLEHSRLQQQAEQSGERAARLRQDLEEISAHEEDLRATREEAEARFEALDAELAEHQSRFADAEIAGEDLAAQAEAARARLRELERAAQEAEFAERGVQSRIADLQRNRQLAADQSQRAAVELEQLQADLADLDASASQAGLQDALEVRAEREEALSRARQELDNLSALLRGADEERMQQERALEPLRARITELQLQEQAARLAEEQFTEQLNAREVDREALAQELAAMPDEWRRANWLQSEVGRISRQIDSLGSVNLAALDELNASRERKEFLDSQQQDLLTAIDTLEDAIRKIDRETRELLQATFDTVNGHFGELFPKLFGGGEAKLTMTGDEILDAGVQVMAQPPGKRNSTIHLLSGGEKALTATALVFALFKLNPAPFCLLDEVDAPLDDANTERYANLVSSMSEQTQFLFISHNKIAMQMAKQLVGVTMQEQGVSRIVAVDIDSAVQMAAEAA</sequence>
<dbReference type="EMBL" id="AM902716">
    <property type="protein sequence ID" value="CAP42043.1"/>
    <property type="status" value="ALT_INIT"/>
    <property type="molecule type" value="Genomic_DNA"/>
</dbReference>
<dbReference type="SMR" id="A9II65"/>
<dbReference type="STRING" id="94624.Bpet1704"/>
<dbReference type="KEGG" id="bpt:Bpet1704"/>
<dbReference type="eggNOG" id="COG1196">
    <property type="taxonomic scope" value="Bacteria"/>
</dbReference>
<dbReference type="Proteomes" id="UP000001225">
    <property type="component" value="Chromosome"/>
</dbReference>
<dbReference type="GO" id="GO:0005694">
    <property type="term" value="C:chromosome"/>
    <property type="evidence" value="ECO:0007669"/>
    <property type="project" value="InterPro"/>
</dbReference>
<dbReference type="GO" id="GO:0005737">
    <property type="term" value="C:cytoplasm"/>
    <property type="evidence" value="ECO:0007669"/>
    <property type="project" value="UniProtKB-SubCell"/>
</dbReference>
<dbReference type="GO" id="GO:0005524">
    <property type="term" value="F:ATP binding"/>
    <property type="evidence" value="ECO:0007669"/>
    <property type="project" value="UniProtKB-UniRule"/>
</dbReference>
<dbReference type="GO" id="GO:0016887">
    <property type="term" value="F:ATP hydrolysis activity"/>
    <property type="evidence" value="ECO:0007669"/>
    <property type="project" value="InterPro"/>
</dbReference>
<dbReference type="GO" id="GO:0003677">
    <property type="term" value="F:DNA binding"/>
    <property type="evidence" value="ECO:0007669"/>
    <property type="project" value="UniProtKB-UniRule"/>
</dbReference>
<dbReference type="GO" id="GO:0030261">
    <property type="term" value="P:chromosome condensation"/>
    <property type="evidence" value="ECO:0007669"/>
    <property type="project" value="InterPro"/>
</dbReference>
<dbReference type="GO" id="GO:0007059">
    <property type="term" value="P:chromosome segregation"/>
    <property type="evidence" value="ECO:0007669"/>
    <property type="project" value="UniProtKB-UniRule"/>
</dbReference>
<dbReference type="GO" id="GO:0006260">
    <property type="term" value="P:DNA replication"/>
    <property type="evidence" value="ECO:0007669"/>
    <property type="project" value="UniProtKB-UniRule"/>
</dbReference>
<dbReference type="GO" id="GO:0007062">
    <property type="term" value="P:sister chromatid cohesion"/>
    <property type="evidence" value="ECO:0007669"/>
    <property type="project" value="InterPro"/>
</dbReference>
<dbReference type="CDD" id="cd03278">
    <property type="entry name" value="ABC_SMC_barmotin"/>
    <property type="match status" value="2"/>
</dbReference>
<dbReference type="Gene3D" id="3.40.50.300">
    <property type="entry name" value="P-loop containing nucleotide triphosphate hydrolases"/>
    <property type="match status" value="2"/>
</dbReference>
<dbReference type="HAMAP" id="MF_01894">
    <property type="entry name" value="Smc_prok"/>
    <property type="match status" value="1"/>
</dbReference>
<dbReference type="InterPro" id="IPR027417">
    <property type="entry name" value="P-loop_NTPase"/>
</dbReference>
<dbReference type="InterPro" id="IPR003395">
    <property type="entry name" value="RecF/RecN/SMC_N"/>
</dbReference>
<dbReference type="InterPro" id="IPR024704">
    <property type="entry name" value="SMC"/>
</dbReference>
<dbReference type="InterPro" id="IPR010935">
    <property type="entry name" value="SMC_hinge"/>
</dbReference>
<dbReference type="InterPro" id="IPR036277">
    <property type="entry name" value="SMC_hinge_sf"/>
</dbReference>
<dbReference type="InterPro" id="IPR011890">
    <property type="entry name" value="SMC_prok"/>
</dbReference>
<dbReference type="NCBIfam" id="TIGR02168">
    <property type="entry name" value="SMC_prok_B"/>
    <property type="match status" value="1"/>
</dbReference>
<dbReference type="PANTHER" id="PTHR43977">
    <property type="entry name" value="STRUCTURAL MAINTENANCE OF CHROMOSOMES PROTEIN 3"/>
    <property type="match status" value="1"/>
</dbReference>
<dbReference type="Pfam" id="PF06470">
    <property type="entry name" value="SMC_hinge"/>
    <property type="match status" value="1"/>
</dbReference>
<dbReference type="Pfam" id="PF02463">
    <property type="entry name" value="SMC_N"/>
    <property type="match status" value="1"/>
</dbReference>
<dbReference type="PIRSF" id="PIRSF005719">
    <property type="entry name" value="SMC"/>
    <property type="match status" value="1"/>
</dbReference>
<dbReference type="SMART" id="SM00968">
    <property type="entry name" value="SMC_hinge"/>
    <property type="match status" value="1"/>
</dbReference>
<dbReference type="SUPFAM" id="SSF52540">
    <property type="entry name" value="P-loop containing nucleoside triphosphate hydrolases"/>
    <property type="match status" value="1"/>
</dbReference>
<dbReference type="SUPFAM" id="SSF75553">
    <property type="entry name" value="Smc hinge domain"/>
    <property type="match status" value="1"/>
</dbReference>
<keyword id="KW-0067">ATP-binding</keyword>
<keyword id="KW-0175">Coiled coil</keyword>
<keyword id="KW-0963">Cytoplasm</keyword>
<keyword id="KW-0238">DNA-binding</keyword>
<keyword id="KW-0547">Nucleotide-binding</keyword>
<protein>
    <recommendedName>
        <fullName evidence="1">Chromosome partition protein Smc</fullName>
    </recommendedName>
</protein>
<feature type="chain" id="PRO_0000409264" description="Chromosome partition protein Smc">
    <location>
        <begin position="1"/>
        <end position="1176"/>
    </location>
</feature>
<feature type="domain" description="SMC hinge">
    <location>
        <begin position="521"/>
        <end position="623"/>
    </location>
</feature>
<feature type="coiled-coil region" evidence="1">
    <location>
        <begin position="169"/>
        <end position="506"/>
    </location>
</feature>
<feature type="coiled-coil region" evidence="1">
    <location>
        <begin position="653"/>
        <end position="947"/>
    </location>
</feature>
<feature type="coiled-coil region" evidence="1">
    <location>
        <begin position="987"/>
        <end position="1024"/>
    </location>
</feature>
<feature type="binding site" evidence="1">
    <location>
        <begin position="32"/>
        <end position="39"/>
    </location>
    <ligand>
        <name>ATP</name>
        <dbReference type="ChEBI" id="CHEBI:30616"/>
    </ligand>
</feature>
<evidence type="ECO:0000255" key="1">
    <source>
        <dbReference type="HAMAP-Rule" id="MF_01894"/>
    </source>
</evidence>
<evidence type="ECO:0000305" key="2"/>
<accession>A9II65</accession>
<reference key="1">
    <citation type="journal article" date="2008" name="BMC Genomics">
        <title>The missing link: Bordetella petrii is endowed with both the metabolic versatility of environmental bacteria and virulence traits of pathogenic Bordetellae.</title>
        <authorList>
            <person name="Gross R."/>
            <person name="Guzman C.A."/>
            <person name="Sebaihia M."/>
            <person name="Martin dos Santos V.A.P."/>
            <person name="Pieper D.H."/>
            <person name="Koebnik R."/>
            <person name="Lechner M."/>
            <person name="Bartels D."/>
            <person name="Buhrmester J."/>
            <person name="Choudhuri J.V."/>
            <person name="Ebensen T."/>
            <person name="Gaigalat L."/>
            <person name="Herrmann S."/>
            <person name="Khachane A.N."/>
            <person name="Larisch C."/>
            <person name="Link S."/>
            <person name="Linke B."/>
            <person name="Meyer F."/>
            <person name="Mormann S."/>
            <person name="Nakunst D."/>
            <person name="Rueckert C."/>
            <person name="Schneiker-Bekel S."/>
            <person name="Schulze K."/>
            <person name="Voerholter F.-J."/>
            <person name="Yevsa T."/>
            <person name="Engle J.T."/>
            <person name="Goldman W.E."/>
            <person name="Puehler A."/>
            <person name="Goebel U.B."/>
            <person name="Goesmann A."/>
            <person name="Bloecker H."/>
            <person name="Kaiser O."/>
            <person name="Martinez-Arias R."/>
        </authorList>
    </citation>
    <scope>NUCLEOTIDE SEQUENCE [LARGE SCALE GENOMIC DNA]</scope>
    <source>
        <strain>ATCC BAA-461 / DSM 12804 / CCUG 43448</strain>
    </source>
</reference>